<name>NEC1_NICLS</name>
<reference evidence="7" key="1">
    <citation type="submission" date="2001-08" db="EMBL/GenBank/DDBJ databases">
        <title>Cloning and characterization of a Nectarin I cDNA from Nicotiana langsdorffii x Nicotiana sanderae.</title>
        <authorList>
            <person name="Carter C."/>
            <person name="Thornburg R.W."/>
        </authorList>
    </citation>
    <scope>NUCLEOTIDE SEQUENCE [MRNA]</scope>
</reference>
<reference evidence="6" key="2">
    <citation type="journal article" date="1999" name="Plant Mol. Biol.">
        <title>Nectarin I is a novel, soluble germin-like protein expressed in the nectar of Nicotiana sp.</title>
        <authorList>
            <person name="Carter C."/>
            <person name="Graham R.A."/>
            <person name="Thornburg R.W."/>
        </authorList>
    </citation>
    <scope>PROTEIN SEQUENCE OF 33-77</scope>
    <scope>SUBUNIT</scope>
    <scope>SUBCELLULAR LOCATION</scope>
    <scope>TISSUE SPECIFICITY</scope>
    <scope>DEVELOPMENTAL STAGE</scope>
</reference>
<reference evidence="6" key="3">
    <citation type="journal article" date="2000" name="J. Biol. Chem.">
        <title>Tobacco nectarin I. Purification and characterization as a germin-like, manganese superoxide dismutase implicated in the defense of floral reproductive tissues.</title>
        <authorList>
            <person name="Carter C."/>
            <person name="Thornburg R.W."/>
        </authorList>
    </citation>
    <scope>COFACTOR</scope>
    <scope>SUBUNIT</scope>
    <scope>MASS SPECTROMETRY</scope>
</reference>
<organism evidence="7">
    <name type="scientific">Nicotiana langsdorffii x Nicotiana sanderae</name>
    <name type="common">Ornamental tobacco</name>
    <dbReference type="NCBI Taxonomy" id="164110"/>
    <lineage>
        <taxon>Eukaryota</taxon>
        <taxon>Viridiplantae</taxon>
        <taxon>Streptophyta</taxon>
        <taxon>Embryophyta</taxon>
        <taxon>Tracheophyta</taxon>
        <taxon>Spermatophyta</taxon>
        <taxon>Magnoliopsida</taxon>
        <taxon>eudicotyledons</taxon>
        <taxon>Gunneridae</taxon>
        <taxon>Pentapetalae</taxon>
        <taxon>asterids</taxon>
        <taxon>lamiids</taxon>
        <taxon>Solanales</taxon>
        <taxon>Solanaceae</taxon>
        <taxon>Nicotianoideae</taxon>
        <taxon>Nicotianeae</taxon>
        <taxon>Nicotiana</taxon>
    </lineage>
</organism>
<keyword id="KW-0052">Apoplast</keyword>
<keyword id="KW-0903">Direct protein sequencing</keyword>
<keyword id="KW-1015">Disulfide bond</keyword>
<keyword id="KW-0325">Glycoprotein</keyword>
<keyword id="KW-0464">Manganese</keyword>
<keyword id="KW-0479">Metal-binding</keyword>
<keyword id="KW-0560">Oxidoreductase</keyword>
<keyword id="KW-0964">Secreted</keyword>
<keyword id="KW-0732">Signal</keyword>
<comment type="function">
    <text evidence="3 5">May interact with bacterial adhesins thereby protecting the reproductive tissues from microbial attack. Has no oxalate oxidase activity.</text>
</comment>
<comment type="catalytic activity">
    <reaction>
        <text>2 superoxide + 2 H(+) = H2O2 + O2</text>
        <dbReference type="Rhea" id="RHEA:20696"/>
        <dbReference type="ChEBI" id="CHEBI:15378"/>
        <dbReference type="ChEBI" id="CHEBI:15379"/>
        <dbReference type="ChEBI" id="CHEBI:16240"/>
        <dbReference type="ChEBI" id="CHEBI:18421"/>
        <dbReference type="EC" id="1.15.1.1"/>
    </reaction>
</comment>
<comment type="cofactor">
    <cofactor evidence="4">
        <name>Mn(2+)</name>
        <dbReference type="ChEBI" id="CHEBI:29035"/>
    </cofactor>
    <text evidence="4">Binds 1 Mn(2+) ion per monomer.</text>
</comment>
<comment type="subunit">
    <text evidence="3 4">Monomer. In the absence of manganese, it forms tetrameric and pentameric forms which show superoxide dismutase activity.</text>
</comment>
<comment type="subcellular location">
    <subcellularLocation>
        <location evidence="3">Secreted</location>
        <location evidence="3">Extracellular space</location>
        <location evidence="3">Apoplast</location>
    </subcellularLocation>
    <text>Found in the nectar.</text>
</comment>
<comment type="tissue specificity">
    <text evidence="3">Nectary tissues and to a lower level ovary. Not detected in petals, stems, leaves, roots or other floral tissues.</text>
</comment>
<comment type="developmental stage">
    <text evidence="3">Expressed during nectar secretion, while the flowers remain open.</text>
</comment>
<comment type="mass spectrometry"/>
<comment type="similarity">
    <text evidence="6">Belongs to the germin family.</text>
</comment>
<accession>Q94EG3</accession>
<proteinExistence type="evidence at protein level"/>
<dbReference type="EC" id="1.15.1.1"/>
<dbReference type="EMBL" id="AF411917">
    <property type="protein sequence ID" value="AAK95664.1"/>
    <property type="molecule type" value="mRNA"/>
</dbReference>
<dbReference type="SMR" id="Q94EG3"/>
<dbReference type="GlyCosmos" id="Q94EG3">
    <property type="glycosylation" value="1 site, No reported glycans"/>
</dbReference>
<dbReference type="GO" id="GO:0048046">
    <property type="term" value="C:apoplast"/>
    <property type="evidence" value="ECO:0007669"/>
    <property type="project" value="UniProtKB-SubCell"/>
</dbReference>
<dbReference type="GO" id="GO:0030145">
    <property type="term" value="F:manganese ion binding"/>
    <property type="evidence" value="ECO:0007669"/>
    <property type="project" value="InterPro"/>
</dbReference>
<dbReference type="GO" id="GO:0004784">
    <property type="term" value="F:superoxide dismutase activity"/>
    <property type="evidence" value="ECO:0007669"/>
    <property type="project" value="UniProtKB-EC"/>
</dbReference>
<dbReference type="CDD" id="cd02241">
    <property type="entry name" value="cupin_OxOx"/>
    <property type="match status" value="1"/>
</dbReference>
<dbReference type="FunFam" id="2.60.120.10:FF:000025">
    <property type="entry name" value="germin-like protein subfamily 2 member 1"/>
    <property type="match status" value="1"/>
</dbReference>
<dbReference type="Gene3D" id="2.60.120.10">
    <property type="entry name" value="Jelly Rolls"/>
    <property type="match status" value="1"/>
</dbReference>
<dbReference type="InterPro" id="IPR006045">
    <property type="entry name" value="Cupin_1"/>
</dbReference>
<dbReference type="InterPro" id="IPR001929">
    <property type="entry name" value="Germin"/>
</dbReference>
<dbReference type="InterPro" id="IPR019780">
    <property type="entry name" value="Germin_Mn-BS"/>
</dbReference>
<dbReference type="InterPro" id="IPR014710">
    <property type="entry name" value="RmlC-like_jellyroll"/>
</dbReference>
<dbReference type="InterPro" id="IPR011051">
    <property type="entry name" value="RmlC_Cupin_sf"/>
</dbReference>
<dbReference type="PANTHER" id="PTHR31238">
    <property type="entry name" value="GERMIN-LIKE PROTEIN SUBFAMILY 3 MEMBER 3"/>
    <property type="match status" value="1"/>
</dbReference>
<dbReference type="Pfam" id="PF00190">
    <property type="entry name" value="Cupin_1"/>
    <property type="match status" value="1"/>
</dbReference>
<dbReference type="PRINTS" id="PR00325">
    <property type="entry name" value="GERMIN"/>
</dbReference>
<dbReference type="SMART" id="SM00835">
    <property type="entry name" value="Cupin_1"/>
    <property type="match status" value="1"/>
</dbReference>
<dbReference type="SUPFAM" id="SSF51182">
    <property type="entry name" value="RmlC-like cupins"/>
    <property type="match status" value="1"/>
</dbReference>
<dbReference type="PROSITE" id="PS00725">
    <property type="entry name" value="GERMIN"/>
    <property type="match status" value="1"/>
</dbReference>
<feature type="signal peptide" evidence="3">
    <location>
        <begin position="1"/>
        <end position="32"/>
    </location>
</feature>
<feature type="chain" id="PRO_0000010840" description="Nectarin-1">
    <location>
        <begin position="33"/>
        <end position="229"/>
    </location>
</feature>
<feature type="domain" description="Cupin type-1" evidence="2">
    <location>
        <begin position="69"/>
        <end position="217"/>
    </location>
</feature>
<feature type="binding site" evidence="1">
    <location>
        <position position="117"/>
    </location>
    <ligand>
        <name>Mn(2+)</name>
        <dbReference type="ChEBI" id="CHEBI:29035"/>
    </ligand>
</feature>
<feature type="binding site" evidence="1">
    <location>
        <position position="119"/>
    </location>
    <ligand>
        <name>Mn(2+)</name>
        <dbReference type="ChEBI" id="CHEBI:29035"/>
    </ligand>
</feature>
<feature type="binding site" evidence="1">
    <location>
        <position position="124"/>
    </location>
    <ligand>
        <name>Mn(2+)</name>
        <dbReference type="ChEBI" id="CHEBI:29035"/>
    </ligand>
</feature>
<feature type="binding site" evidence="1">
    <location>
        <position position="163"/>
    </location>
    <ligand>
        <name>Mn(2+)</name>
        <dbReference type="ChEBI" id="CHEBI:29035"/>
    </ligand>
</feature>
<feature type="glycosylation site" description="N-linked (GlcNAc...) asparagine">
    <location>
        <position position="60"/>
    </location>
</feature>
<feature type="disulfide bond" evidence="1">
    <location>
        <begin position="42"/>
        <end position="57"/>
    </location>
</feature>
<feature type="sequence conflict" description="In Ref. 2; AA sequence." evidence="6" ref="2">
    <original>T</original>
    <variation>A</variation>
    <location>
        <position position="59"/>
    </location>
</feature>
<sequence>MAAFGINSKIFQSMEMAILFLLAISIDRYCFAADEDMLQDVCVADLHSKVKVNGFPCKTNFTAADFSSLAISKPGATNNKFGSVVTTANVEQVPGLNTLGVSLARIDYAPGGINPPHTHPRASEMVFVMEGELDVGFITTANVLVSKKIIKGEVFVFPRGLVHFQKNNGEVPAAVISAFNSQLPGTQSIPITLFGASPPVPDDVLAQTFQINTEDVQQIKSKFAPVKKF</sequence>
<evidence type="ECO:0000250" key="1"/>
<evidence type="ECO:0000255" key="2"/>
<evidence type="ECO:0000269" key="3">
    <source>
    </source>
</evidence>
<evidence type="ECO:0000269" key="4">
    <source>
    </source>
</evidence>
<evidence type="ECO:0000303" key="5">
    <source>
    </source>
</evidence>
<evidence type="ECO:0000305" key="6"/>
<evidence type="ECO:0000312" key="7">
    <source>
        <dbReference type="EMBL" id="AAK95664.1"/>
    </source>
</evidence>
<gene>
    <name type="primary">NECI</name>
</gene>
<protein>
    <recommendedName>
        <fullName>Nectarin-1</fullName>
        <ecNumber>1.15.1.1</ecNumber>
    </recommendedName>
    <alternativeName>
        <fullName>Superoxide dismutase [Mn]</fullName>
    </alternativeName>
</protein>